<feature type="chain" id="PRO_1000070266" description="Ribonuclease Z">
    <location>
        <begin position="1"/>
        <end position="301"/>
    </location>
</feature>
<feature type="active site" description="Proton acceptor" evidence="1">
    <location>
        <position position="65"/>
    </location>
</feature>
<feature type="binding site" evidence="1">
    <location>
        <position position="61"/>
    </location>
    <ligand>
        <name>Zn(2+)</name>
        <dbReference type="ChEBI" id="CHEBI:29105"/>
        <label>1</label>
        <note>catalytic</note>
    </ligand>
</feature>
<feature type="binding site" evidence="1">
    <location>
        <position position="63"/>
    </location>
    <ligand>
        <name>Zn(2+)</name>
        <dbReference type="ChEBI" id="CHEBI:29105"/>
        <label>1</label>
        <note>catalytic</note>
    </ligand>
</feature>
<feature type="binding site" evidence="1">
    <location>
        <position position="65"/>
    </location>
    <ligand>
        <name>Zn(2+)</name>
        <dbReference type="ChEBI" id="CHEBI:29105"/>
        <label>2</label>
        <note>catalytic</note>
    </ligand>
</feature>
<feature type="binding site" evidence="1">
    <location>
        <position position="66"/>
    </location>
    <ligand>
        <name>Zn(2+)</name>
        <dbReference type="ChEBI" id="CHEBI:29105"/>
        <label>2</label>
        <note>catalytic</note>
    </ligand>
</feature>
<feature type="binding site" evidence="1">
    <location>
        <position position="140"/>
    </location>
    <ligand>
        <name>Zn(2+)</name>
        <dbReference type="ChEBI" id="CHEBI:29105"/>
        <label>1</label>
        <note>catalytic</note>
    </ligand>
</feature>
<feature type="binding site" evidence="1">
    <location>
        <position position="211"/>
    </location>
    <ligand>
        <name>Zn(2+)</name>
        <dbReference type="ChEBI" id="CHEBI:29105"/>
        <label>1</label>
        <note>catalytic</note>
    </ligand>
</feature>
<feature type="binding site" evidence="1">
    <location>
        <position position="211"/>
    </location>
    <ligand>
        <name>Zn(2+)</name>
        <dbReference type="ChEBI" id="CHEBI:29105"/>
        <label>2</label>
        <note>catalytic</note>
    </ligand>
</feature>
<feature type="binding site" evidence="1">
    <location>
        <position position="269"/>
    </location>
    <ligand>
        <name>Zn(2+)</name>
        <dbReference type="ChEBI" id="CHEBI:29105"/>
        <label>2</label>
        <note>catalytic</note>
    </ligand>
</feature>
<protein>
    <recommendedName>
        <fullName evidence="1">Ribonuclease Z</fullName>
        <shortName evidence="1">RNase Z</shortName>
        <ecNumber evidence="1">3.1.26.11</ecNumber>
    </recommendedName>
    <alternativeName>
        <fullName evidence="1">tRNA 3 endonuclease</fullName>
    </alternativeName>
    <alternativeName>
        <fullName evidence="1">tRNase Z</fullName>
    </alternativeName>
</protein>
<sequence>MFELIFLGTSASVPSHDRNHPGLLVQAGGQRILVDCGEGIQRQLLASGAGFRRLDRILLTHGHLDHVLGIPGLFSTLRLRRSADVMSVHGSPGTIDVVIRMLAGLWGDGRAPIPLELVPLTPGQVLDAGAFTINCFAVRHRDTDSFGFEFVSPARRHLLPERLAALAVPDGPIRKTLADGYPVTLDDGRIVTPEDVLGTPGGGKKLVIVGDTETTDGLQAHVRGADLLVIEATFLQRDSATARDYGHLTAAEAAALAASGNVGQLVLNHISGRYPDEEILAEARSIFPATRIASDFDRLTV</sequence>
<comment type="function">
    <text evidence="1">Zinc phosphodiesterase, which displays some tRNA 3'-processing endonuclease activity. Probably involved in tRNA maturation, by removing a 3'-trailer from precursor tRNA.</text>
</comment>
<comment type="catalytic activity">
    <reaction evidence="1">
        <text>Endonucleolytic cleavage of RNA, removing extra 3' nucleotides from tRNA precursor, generating 3' termini of tRNAs. A 3'-hydroxy group is left at the tRNA terminus and a 5'-phosphoryl group is left at the trailer molecule.</text>
        <dbReference type="EC" id="3.1.26.11"/>
    </reaction>
</comment>
<comment type="cofactor">
    <cofactor evidence="1">
        <name>Zn(2+)</name>
        <dbReference type="ChEBI" id="CHEBI:29105"/>
    </cofactor>
    <text evidence="1">Binds 2 Zn(2+) ions.</text>
</comment>
<comment type="subunit">
    <text evidence="1">Homodimer.</text>
</comment>
<comment type="similarity">
    <text evidence="1">Belongs to the RNase Z family.</text>
</comment>
<reference key="1">
    <citation type="journal article" date="2007" name="Science">
        <title>Legumes symbioses: absence of nod genes in photosynthetic bradyrhizobia.</title>
        <authorList>
            <person name="Giraud E."/>
            <person name="Moulin L."/>
            <person name="Vallenet D."/>
            <person name="Barbe V."/>
            <person name="Cytryn E."/>
            <person name="Avarre J.-C."/>
            <person name="Jaubert M."/>
            <person name="Simon D."/>
            <person name="Cartieaux F."/>
            <person name="Prin Y."/>
            <person name="Bena G."/>
            <person name="Hannibal L."/>
            <person name="Fardoux J."/>
            <person name="Kojadinovic M."/>
            <person name="Vuillet L."/>
            <person name="Lajus A."/>
            <person name="Cruveiller S."/>
            <person name="Rouy Z."/>
            <person name="Mangenot S."/>
            <person name="Segurens B."/>
            <person name="Dossat C."/>
            <person name="Franck W.L."/>
            <person name="Chang W.-S."/>
            <person name="Saunders E."/>
            <person name="Bruce D."/>
            <person name="Richardson P."/>
            <person name="Normand P."/>
            <person name="Dreyfus B."/>
            <person name="Pignol D."/>
            <person name="Stacey G."/>
            <person name="Emerich D."/>
            <person name="Vermeglio A."/>
            <person name="Medigue C."/>
            <person name="Sadowsky M."/>
        </authorList>
    </citation>
    <scope>NUCLEOTIDE SEQUENCE [LARGE SCALE GENOMIC DNA]</scope>
    <source>
        <strain>ORS 278</strain>
    </source>
</reference>
<dbReference type="EC" id="3.1.26.11" evidence="1"/>
<dbReference type="EMBL" id="CU234118">
    <property type="protein sequence ID" value="CAL75356.1"/>
    <property type="molecule type" value="Genomic_DNA"/>
</dbReference>
<dbReference type="RefSeq" id="WP_011924591.1">
    <property type="nucleotide sequence ID" value="NC_009445.1"/>
</dbReference>
<dbReference type="SMR" id="A4YN80"/>
<dbReference type="STRING" id="114615.BRADO1465"/>
<dbReference type="KEGG" id="bra:BRADO1465"/>
<dbReference type="eggNOG" id="COG1234">
    <property type="taxonomic scope" value="Bacteria"/>
</dbReference>
<dbReference type="HOGENOM" id="CLU_031317_2_1_5"/>
<dbReference type="OrthoDB" id="9803916at2"/>
<dbReference type="Proteomes" id="UP000001994">
    <property type="component" value="Chromosome"/>
</dbReference>
<dbReference type="GO" id="GO:0042781">
    <property type="term" value="F:3'-tRNA processing endoribonuclease activity"/>
    <property type="evidence" value="ECO:0007669"/>
    <property type="project" value="UniProtKB-UniRule"/>
</dbReference>
<dbReference type="GO" id="GO:0008270">
    <property type="term" value="F:zinc ion binding"/>
    <property type="evidence" value="ECO:0007669"/>
    <property type="project" value="UniProtKB-UniRule"/>
</dbReference>
<dbReference type="CDD" id="cd07717">
    <property type="entry name" value="RNaseZ_ZiPD-like_MBL-fold"/>
    <property type="match status" value="1"/>
</dbReference>
<dbReference type="Gene3D" id="3.60.15.10">
    <property type="entry name" value="Ribonuclease Z/Hydroxyacylglutathione hydrolase-like"/>
    <property type="match status" value="1"/>
</dbReference>
<dbReference type="HAMAP" id="MF_01818">
    <property type="entry name" value="RNase_Z_BN"/>
    <property type="match status" value="1"/>
</dbReference>
<dbReference type="InterPro" id="IPR001279">
    <property type="entry name" value="Metallo-B-lactamas"/>
</dbReference>
<dbReference type="InterPro" id="IPR036866">
    <property type="entry name" value="RibonucZ/Hydroxyglut_hydro"/>
</dbReference>
<dbReference type="InterPro" id="IPR013471">
    <property type="entry name" value="RNase_Z/BN"/>
</dbReference>
<dbReference type="PANTHER" id="PTHR46018:SF7">
    <property type="entry name" value="RIBONUCLEASE Z"/>
    <property type="match status" value="1"/>
</dbReference>
<dbReference type="PANTHER" id="PTHR46018">
    <property type="entry name" value="ZINC PHOSPHODIESTERASE ELAC PROTEIN 1"/>
    <property type="match status" value="1"/>
</dbReference>
<dbReference type="Pfam" id="PF12706">
    <property type="entry name" value="Lactamase_B_2"/>
    <property type="match status" value="2"/>
</dbReference>
<dbReference type="SMART" id="SM00849">
    <property type="entry name" value="Lactamase_B"/>
    <property type="match status" value="1"/>
</dbReference>
<dbReference type="SUPFAM" id="SSF56281">
    <property type="entry name" value="Metallo-hydrolase/oxidoreductase"/>
    <property type="match status" value="1"/>
</dbReference>
<keyword id="KW-0255">Endonuclease</keyword>
<keyword id="KW-0378">Hydrolase</keyword>
<keyword id="KW-0479">Metal-binding</keyword>
<keyword id="KW-0540">Nuclease</keyword>
<keyword id="KW-1185">Reference proteome</keyword>
<keyword id="KW-0819">tRNA processing</keyword>
<keyword id="KW-0862">Zinc</keyword>
<proteinExistence type="inferred from homology"/>
<evidence type="ECO:0000255" key="1">
    <source>
        <dbReference type="HAMAP-Rule" id="MF_01818"/>
    </source>
</evidence>
<organism>
    <name type="scientific">Bradyrhizobium sp. (strain ORS 278)</name>
    <dbReference type="NCBI Taxonomy" id="114615"/>
    <lineage>
        <taxon>Bacteria</taxon>
        <taxon>Pseudomonadati</taxon>
        <taxon>Pseudomonadota</taxon>
        <taxon>Alphaproteobacteria</taxon>
        <taxon>Hyphomicrobiales</taxon>
        <taxon>Nitrobacteraceae</taxon>
        <taxon>Bradyrhizobium</taxon>
    </lineage>
</organism>
<accession>A4YN80</accession>
<gene>
    <name evidence="1" type="primary">rnz</name>
    <name type="ordered locus">BRADO1465</name>
</gene>
<name>RNZ_BRASO</name>